<gene>
    <name evidence="1" type="primary">thiM</name>
    <name type="ordered locus">Mpal_1692</name>
</gene>
<name>THIM_METPE</name>
<organism>
    <name type="scientific">Methanosphaerula palustris (strain ATCC BAA-1556 / DSM 19958 / E1-9c)</name>
    <dbReference type="NCBI Taxonomy" id="521011"/>
    <lineage>
        <taxon>Archaea</taxon>
        <taxon>Methanobacteriati</taxon>
        <taxon>Methanobacteriota</taxon>
        <taxon>Stenosarchaea group</taxon>
        <taxon>Methanomicrobia</taxon>
        <taxon>Methanomicrobiales</taxon>
        <taxon>Methanoregulaceae</taxon>
        <taxon>Methanosphaerula</taxon>
    </lineage>
</organism>
<evidence type="ECO:0000255" key="1">
    <source>
        <dbReference type="HAMAP-Rule" id="MF_00228"/>
    </source>
</evidence>
<dbReference type="EC" id="2.7.1.50" evidence="1"/>
<dbReference type="EMBL" id="CP001338">
    <property type="protein sequence ID" value="ACL17000.1"/>
    <property type="molecule type" value="Genomic_DNA"/>
</dbReference>
<dbReference type="RefSeq" id="WP_012618319.1">
    <property type="nucleotide sequence ID" value="NC_011832.1"/>
</dbReference>
<dbReference type="SMR" id="B8GJF9"/>
<dbReference type="STRING" id="521011.Mpal_1692"/>
<dbReference type="GeneID" id="7271255"/>
<dbReference type="KEGG" id="mpl:Mpal_1692"/>
<dbReference type="eggNOG" id="arCOG00019">
    <property type="taxonomic scope" value="Archaea"/>
</dbReference>
<dbReference type="HOGENOM" id="CLU_019943_0_0_2"/>
<dbReference type="OrthoDB" id="214286at2157"/>
<dbReference type="UniPathway" id="UPA00060">
    <property type="reaction ID" value="UER00139"/>
</dbReference>
<dbReference type="Proteomes" id="UP000002457">
    <property type="component" value="Chromosome"/>
</dbReference>
<dbReference type="GO" id="GO:0005524">
    <property type="term" value="F:ATP binding"/>
    <property type="evidence" value="ECO:0007669"/>
    <property type="project" value="UniProtKB-UniRule"/>
</dbReference>
<dbReference type="GO" id="GO:0004417">
    <property type="term" value="F:hydroxyethylthiazole kinase activity"/>
    <property type="evidence" value="ECO:0007669"/>
    <property type="project" value="UniProtKB-UniRule"/>
</dbReference>
<dbReference type="GO" id="GO:0000287">
    <property type="term" value="F:magnesium ion binding"/>
    <property type="evidence" value="ECO:0007669"/>
    <property type="project" value="UniProtKB-UniRule"/>
</dbReference>
<dbReference type="GO" id="GO:0009228">
    <property type="term" value="P:thiamine biosynthetic process"/>
    <property type="evidence" value="ECO:0007669"/>
    <property type="project" value="UniProtKB-KW"/>
</dbReference>
<dbReference type="GO" id="GO:0009229">
    <property type="term" value="P:thiamine diphosphate biosynthetic process"/>
    <property type="evidence" value="ECO:0007669"/>
    <property type="project" value="UniProtKB-UniRule"/>
</dbReference>
<dbReference type="CDD" id="cd01170">
    <property type="entry name" value="THZ_kinase"/>
    <property type="match status" value="1"/>
</dbReference>
<dbReference type="Gene3D" id="3.40.1190.20">
    <property type="match status" value="1"/>
</dbReference>
<dbReference type="HAMAP" id="MF_00228">
    <property type="entry name" value="Thz_kinase"/>
    <property type="match status" value="1"/>
</dbReference>
<dbReference type="InterPro" id="IPR000417">
    <property type="entry name" value="Hyethyz_kinase"/>
</dbReference>
<dbReference type="InterPro" id="IPR029056">
    <property type="entry name" value="Ribokinase-like"/>
</dbReference>
<dbReference type="NCBIfam" id="NF006830">
    <property type="entry name" value="PRK09355.1"/>
    <property type="match status" value="1"/>
</dbReference>
<dbReference type="NCBIfam" id="TIGR00694">
    <property type="entry name" value="thiM"/>
    <property type="match status" value="1"/>
</dbReference>
<dbReference type="Pfam" id="PF02110">
    <property type="entry name" value="HK"/>
    <property type="match status" value="1"/>
</dbReference>
<dbReference type="PIRSF" id="PIRSF000513">
    <property type="entry name" value="Thz_kinase"/>
    <property type="match status" value="1"/>
</dbReference>
<dbReference type="PRINTS" id="PR01099">
    <property type="entry name" value="HYETHTZKNASE"/>
</dbReference>
<dbReference type="SUPFAM" id="SSF53613">
    <property type="entry name" value="Ribokinase-like"/>
    <property type="match status" value="1"/>
</dbReference>
<comment type="function">
    <text evidence="1">Catalyzes the phosphorylation of the hydroxyl group of 4-methyl-5-beta-hydroxyethylthiazole (THZ).</text>
</comment>
<comment type="catalytic activity">
    <reaction evidence="1">
        <text>5-(2-hydroxyethyl)-4-methylthiazole + ATP = 4-methyl-5-(2-phosphooxyethyl)-thiazole + ADP + H(+)</text>
        <dbReference type="Rhea" id="RHEA:24212"/>
        <dbReference type="ChEBI" id="CHEBI:15378"/>
        <dbReference type="ChEBI" id="CHEBI:17957"/>
        <dbReference type="ChEBI" id="CHEBI:30616"/>
        <dbReference type="ChEBI" id="CHEBI:58296"/>
        <dbReference type="ChEBI" id="CHEBI:456216"/>
        <dbReference type="EC" id="2.7.1.50"/>
    </reaction>
</comment>
<comment type="cofactor">
    <cofactor evidence="1">
        <name>Mg(2+)</name>
        <dbReference type="ChEBI" id="CHEBI:18420"/>
    </cofactor>
</comment>
<comment type="pathway">
    <text evidence="1">Cofactor biosynthesis; thiamine diphosphate biosynthesis; 4-methyl-5-(2-phosphoethyl)-thiazole from 5-(2-hydroxyethyl)-4-methylthiazole: step 1/1.</text>
</comment>
<comment type="similarity">
    <text evidence="1">Belongs to the Thz kinase family.</text>
</comment>
<proteinExistence type="inferred from homology"/>
<feature type="chain" id="PRO_0000383920" description="Hydroxyethylthiazole kinase">
    <location>
        <begin position="1"/>
        <end position="265"/>
    </location>
</feature>
<feature type="binding site" evidence="1">
    <location>
        <position position="44"/>
    </location>
    <ligand>
        <name>substrate</name>
    </ligand>
</feature>
<feature type="binding site" evidence="1">
    <location>
        <position position="120"/>
    </location>
    <ligand>
        <name>ATP</name>
        <dbReference type="ChEBI" id="CHEBI:30616"/>
    </ligand>
</feature>
<feature type="binding site" evidence="1">
    <location>
        <position position="166"/>
    </location>
    <ligand>
        <name>ATP</name>
        <dbReference type="ChEBI" id="CHEBI:30616"/>
    </ligand>
</feature>
<feature type="binding site" evidence="1">
    <location>
        <position position="193"/>
    </location>
    <ligand>
        <name>substrate</name>
    </ligand>
</feature>
<keyword id="KW-0067">ATP-binding</keyword>
<keyword id="KW-0418">Kinase</keyword>
<keyword id="KW-0460">Magnesium</keyword>
<keyword id="KW-0479">Metal-binding</keyword>
<keyword id="KW-0547">Nucleotide-binding</keyword>
<keyword id="KW-1185">Reference proteome</keyword>
<keyword id="KW-0784">Thiamine biosynthesis</keyword>
<keyword id="KW-0808">Transferase</keyword>
<accession>B8GJF9</accession>
<sequence length="265" mass="26613">MTLDLASALNDLQTKKPLVHHITNAVTINDCANITLCIGAAPVMAEAPEEVAEMVAMAGALVLNIGTLSKSQISAMLIAGRAANDLEVPVILDPVGAGATMLRTESARRLLTELQVAVVKGNAGEIGLLAGAAGRVRGVDSAGLDGDPVAVCKSLVNAYSCTVAMSGATDIVTDGDRVVLIDNGDPRMGVVSGTGCMASSLTGAFAAGSRDQVCSTAAALAAFGLAGEKAAKRAFGPSSFKVALMDEVAALTPPVLSAGAKIRIL</sequence>
<reference key="1">
    <citation type="journal article" date="2015" name="Genome Announc.">
        <title>Complete Genome Sequence of Methanosphaerula palustris E1-9CT, a Hydrogenotrophic Methanogen Isolated from a Minerotrophic Fen Peatland.</title>
        <authorList>
            <person name="Cadillo-Quiroz H."/>
            <person name="Browne P."/>
            <person name="Kyrpides N."/>
            <person name="Woyke T."/>
            <person name="Goodwin L."/>
            <person name="Detter C."/>
            <person name="Yavitt J.B."/>
            <person name="Zinder S.H."/>
        </authorList>
    </citation>
    <scope>NUCLEOTIDE SEQUENCE [LARGE SCALE GENOMIC DNA]</scope>
    <source>
        <strain>ATCC BAA-1556 / DSM 19958 / E1-9c</strain>
    </source>
</reference>
<protein>
    <recommendedName>
        <fullName evidence="1">Hydroxyethylthiazole kinase</fullName>
        <ecNumber evidence="1">2.7.1.50</ecNumber>
    </recommendedName>
    <alternativeName>
        <fullName evidence="1">4-methyl-5-beta-hydroxyethylthiazole kinase</fullName>
        <shortName evidence="1">TH kinase</shortName>
        <shortName evidence="1">Thz kinase</shortName>
    </alternativeName>
</protein>